<protein>
    <recommendedName>
        <fullName>RING finger domain and kelch repeat-containing protein DDB_G0271372</fullName>
    </recommendedName>
</protein>
<organism>
    <name type="scientific">Dictyostelium discoideum</name>
    <name type="common">Social amoeba</name>
    <dbReference type="NCBI Taxonomy" id="44689"/>
    <lineage>
        <taxon>Eukaryota</taxon>
        <taxon>Amoebozoa</taxon>
        <taxon>Evosea</taxon>
        <taxon>Eumycetozoa</taxon>
        <taxon>Dictyostelia</taxon>
        <taxon>Dictyosteliales</taxon>
        <taxon>Dictyosteliaceae</taxon>
        <taxon>Dictyostelium</taxon>
    </lineage>
</organism>
<dbReference type="EMBL" id="AAFI02000006">
    <property type="protein sequence ID" value="EAL71816.1"/>
    <property type="molecule type" value="Genomic_DNA"/>
</dbReference>
<dbReference type="RefSeq" id="XP_645654.1">
    <property type="nucleotide sequence ID" value="XM_640562.1"/>
</dbReference>
<dbReference type="SMR" id="Q55BF8"/>
<dbReference type="FunCoup" id="Q55BF8">
    <property type="interactions" value="1"/>
</dbReference>
<dbReference type="STRING" id="44689.Q55BF8"/>
<dbReference type="GlyGen" id="Q55BF8">
    <property type="glycosylation" value="2 sites"/>
</dbReference>
<dbReference type="PaxDb" id="44689-DDB0220714"/>
<dbReference type="EnsemblProtists" id="EAL71816">
    <property type="protein sequence ID" value="EAL71816"/>
    <property type="gene ID" value="DDB_G0271372"/>
</dbReference>
<dbReference type="GeneID" id="8617846"/>
<dbReference type="KEGG" id="ddi:DDB_G0271372"/>
<dbReference type="dictyBase" id="DDB_G0271372"/>
<dbReference type="VEuPathDB" id="AmoebaDB:DDB_G0271372"/>
<dbReference type="eggNOG" id="KOG4441">
    <property type="taxonomic scope" value="Eukaryota"/>
</dbReference>
<dbReference type="HOGENOM" id="CLU_300046_0_0_1"/>
<dbReference type="InParanoid" id="Q55BF8"/>
<dbReference type="OMA" id="YINIIGG"/>
<dbReference type="Reactome" id="R-DDI-4641258">
    <property type="pathway name" value="Degradation of DVL"/>
</dbReference>
<dbReference type="Reactome" id="R-DDI-5658442">
    <property type="pathway name" value="Regulation of RAS by GAPs"/>
</dbReference>
<dbReference type="Reactome" id="R-DDI-8951664">
    <property type="pathway name" value="Neddylation"/>
</dbReference>
<dbReference type="Reactome" id="R-DDI-9755511">
    <property type="pathway name" value="KEAP1-NFE2L2 pathway"/>
</dbReference>
<dbReference type="Reactome" id="R-DDI-983168">
    <property type="pathway name" value="Antigen processing: Ubiquitination &amp; Proteasome degradation"/>
</dbReference>
<dbReference type="PRO" id="PR:Q55BF8"/>
<dbReference type="Proteomes" id="UP000002195">
    <property type="component" value="Chromosome 2"/>
</dbReference>
<dbReference type="GO" id="GO:0008270">
    <property type="term" value="F:zinc ion binding"/>
    <property type="evidence" value="ECO:0007669"/>
    <property type="project" value="UniProtKB-KW"/>
</dbReference>
<dbReference type="CDD" id="cd16449">
    <property type="entry name" value="RING-HC"/>
    <property type="match status" value="1"/>
</dbReference>
<dbReference type="Gene3D" id="3.30.160.60">
    <property type="entry name" value="Classic Zinc Finger"/>
    <property type="match status" value="1"/>
</dbReference>
<dbReference type="Gene3D" id="2.120.10.80">
    <property type="entry name" value="Kelch-type beta propeller"/>
    <property type="match status" value="1"/>
</dbReference>
<dbReference type="Gene3D" id="3.30.40.10">
    <property type="entry name" value="Zinc/RING finger domain, C3HC4 (zinc finger)"/>
    <property type="match status" value="1"/>
</dbReference>
<dbReference type="InterPro" id="IPR015915">
    <property type="entry name" value="Kelch-typ_b-propeller"/>
</dbReference>
<dbReference type="InterPro" id="IPR006652">
    <property type="entry name" value="Kelch_1"/>
</dbReference>
<dbReference type="InterPro" id="IPR051746">
    <property type="entry name" value="Kelch_domain_containing_8"/>
</dbReference>
<dbReference type="InterPro" id="IPR000315">
    <property type="entry name" value="Znf_B-box"/>
</dbReference>
<dbReference type="InterPro" id="IPR018957">
    <property type="entry name" value="Znf_C3HC4_RING-type"/>
</dbReference>
<dbReference type="InterPro" id="IPR001841">
    <property type="entry name" value="Znf_RING"/>
</dbReference>
<dbReference type="InterPro" id="IPR013083">
    <property type="entry name" value="Znf_RING/FYVE/PHD"/>
</dbReference>
<dbReference type="InterPro" id="IPR017907">
    <property type="entry name" value="Znf_RING_CS"/>
</dbReference>
<dbReference type="PANTHER" id="PTHR46260">
    <property type="entry name" value="RING-TYPE DOMAIN-CONTAINING PROTEIN"/>
    <property type="match status" value="1"/>
</dbReference>
<dbReference type="PANTHER" id="PTHR46260:SF3">
    <property type="entry name" value="RING-TYPE DOMAIN-CONTAINING PROTEIN"/>
    <property type="match status" value="1"/>
</dbReference>
<dbReference type="Pfam" id="PF24681">
    <property type="entry name" value="Kelch_KLHDC2_KLHL20_DRC7"/>
    <property type="match status" value="1"/>
</dbReference>
<dbReference type="Pfam" id="PF00643">
    <property type="entry name" value="zf-B_box"/>
    <property type="match status" value="1"/>
</dbReference>
<dbReference type="Pfam" id="PF00097">
    <property type="entry name" value="zf-C3HC4"/>
    <property type="match status" value="1"/>
</dbReference>
<dbReference type="SMART" id="SM00336">
    <property type="entry name" value="BBOX"/>
    <property type="match status" value="1"/>
</dbReference>
<dbReference type="SMART" id="SM00612">
    <property type="entry name" value="Kelch"/>
    <property type="match status" value="3"/>
</dbReference>
<dbReference type="SMART" id="SM00184">
    <property type="entry name" value="RING"/>
    <property type="match status" value="1"/>
</dbReference>
<dbReference type="SUPFAM" id="SSF57845">
    <property type="entry name" value="B-box zinc-binding domain"/>
    <property type="match status" value="1"/>
</dbReference>
<dbReference type="SUPFAM" id="SSF117281">
    <property type="entry name" value="Kelch motif"/>
    <property type="match status" value="1"/>
</dbReference>
<dbReference type="SUPFAM" id="SSF57850">
    <property type="entry name" value="RING/U-box"/>
    <property type="match status" value="1"/>
</dbReference>
<dbReference type="PROSITE" id="PS50119">
    <property type="entry name" value="ZF_BBOX"/>
    <property type="match status" value="1"/>
</dbReference>
<dbReference type="PROSITE" id="PS00518">
    <property type="entry name" value="ZF_RING_1"/>
    <property type="match status" value="1"/>
</dbReference>
<dbReference type="PROSITE" id="PS50089">
    <property type="entry name" value="ZF_RING_2"/>
    <property type="match status" value="1"/>
</dbReference>
<evidence type="ECO:0000255" key="1"/>
<evidence type="ECO:0000255" key="2">
    <source>
        <dbReference type="PROSITE-ProRule" id="PRU00024"/>
    </source>
</evidence>
<evidence type="ECO:0000255" key="3">
    <source>
        <dbReference type="PROSITE-ProRule" id="PRU00175"/>
    </source>
</evidence>
<evidence type="ECO:0000256" key="4">
    <source>
        <dbReference type="SAM" id="MobiDB-lite"/>
    </source>
</evidence>
<feature type="chain" id="PRO_0000376005" description="RING finger domain and kelch repeat-containing protein DDB_G0271372">
    <location>
        <begin position="1"/>
        <end position="999"/>
    </location>
</feature>
<feature type="repeat" description="Kelch 1">
    <location>
        <begin position="655"/>
        <end position="700"/>
    </location>
</feature>
<feature type="repeat" description="Kelch 2">
    <location>
        <begin position="702"/>
        <end position="745"/>
    </location>
</feature>
<feature type="repeat" description="Kelch 3">
    <location>
        <begin position="748"/>
        <end position="793"/>
    </location>
</feature>
<feature type="repeat" description="Kelch 4">
    <location>
        <begin position="796"/>
        <end position="842"/>
    </location>
</feature>
<feature type="repeat" description="Kelch 5">
    <location>
        <begin position="844"/>
        <end position="892"/>
    </location>
</feature>
<feature type="zinc finger region" description="RING-type" evidence="3">
    <location>
        <begin position="7"/>
        <end position="49"/>
    </location>
</feature>
<feature type="zinc finger region" description="B box-type" evidence="2">
    <location>
        <begin position="258"/>
        <end position="302"/>
    </location>
</feature>
<feature type="region of interest" description="Disordered" evidence="4">
    <location>
        <begin position="92"/>
        <end position="147"/>
    </location>
</feature>
<feature type="region of interest" description="Disordered" evidence="4">
    <location>
        <begin position="159"/>
        <end position="209"/>
    </location>
</feature>
<feature type="region of interest" description="Disordered" evidence="4">
    <location>
        <begin position="485"/>
        <end position="637"/>
    </location>
</feature>
<feature type="region of interest" description="Disordered" evidence="4">
    <location>
        <begin position="904"/>
        <end position="936"/>
    </location>
</feature>
<feature type="coiled-coil region" evidence="1">
    <location>
        <begin position="355"/>
        <end position="402"/>
    </location>
</feature>
<feature type="compositionally biased region" description="Low complexity" evidence="4">
    <location>
        <begin position="92"/>
        <end position="143"/>
    </location>
</feature>
<feature type="compositionally biased region" description="Polar residues" evidence="4">
    <location>
        <begin position="165"/>
        <end position="196"/>
    </location>
</feature>
<feature type="compositionally biased region" description="Low complexity" evidence="4">
    <location>
        <begin position="485"/>
        <end position="516"/>
    </location>
</feature>
<feature type="compositionally biased region" description="Low complexity" evidence="4">
    <location>
        <begin position="526"/>
        <end position="536"/>
    </location>
</feature>
<feature type="compositionally biased region" description="Polar residues" evidence="4">
    <location>
        <begin position="552"/>
        <end position="612"/>
    </location>
</feature>
<feature type="compositionally biased region" description="Low complexity" evidence="4">
    <location>
        <begin position="613"/>
        <end position="635"/>
    </location>
</feature>
<feature type="compositionally biased region" description="Low complexity" evidence="4">
    <location>
        <begin position="904"/>
        <end position="924"/>
    </location>
</feature>
<feature type="binding site" evidence="2">
    <location>
        <position position="263"/>
    </location>
    <ligand>
        <name>Zn(2+)</name>
        <dbReference type="ChEBI" id="CHEBI:29105"/>
    </ligand>
</feature>
<feature type="binding site" evidence="2">
    <location>
        <position position="266"/>
    </location>
    <ligand>
        <name>Zn(2+)</name>
        <dbReference type="ChEBI" id="CHEBI:29105"/>
    </ligand>
</feature>
<feature type="binding site" evidence="2">
    <location>
        <position position="286"/>
    </location>
    <ligand>
        <name>Zn(2+)</name>
        <dbReference type="ChEBI" id="CHEBI:29105"/>
    </ligand>
</feature>
<feature type="binding site" evidence="2">
    <location>
        <position position="294"/>
    </location>
    <ligand>
        <name>Zn(2+)</name>
        <dbReference type="ChEBI" id="CHEBI:29105"/>
    </ligand>
</feature>
<reference key="1">
    <citation type="journal article" date="2002" name="Nature">
        <title>Sequence and analysis of chromosome 2 of Dictyostelium discoideum.</title>
        <authorList>
            <person name="Gloeckner G."/>
            <person name="Eichinger L."/>
            <person name="Szafranski K."/>
            <person name="Pachebat J.A."/>
            <person name="Bankier A.T."/>
            <person name="Dear P.H."/>
            <person name="Lehmann R."/>
            <person name="Baumgart C."/>
            <person name="Parra G."/>
            <person name="Abril J.F."/>
            <person name="Guigo R."/>
            <person name="Kumpf K."/>
            <person name="Tunggal B."/>
            <person name="Cox E.C."/>
            <person name="Quail M.A."/>
            <person name="Platzer M."/>
            <person name="Rosenthal A."/>
            <person name="Noegel A.A."/>
        </authorList>
    </citation>
    <scope>NUCLEOTIDE SEQUENCE [LARGE SCALE GENOMIC DNA]</scope>
    <source>
        <strain>AX4</strain>
    </source>
</reference>
<reference key="2">
    <citation type="journal article" date="2005" name="Nature">
        <title>The genome of the social amoeba Dictyostelium discoideum.</title>
        <authorList>
            <person name="Eichinger L."/>
            <person name="Pachebat J.A."/>
            <person name="Gloeckner G."/>
            <person name="Rajandream M.A."/>
            <person name="Sucgang R."/>
            <person name="Berriman M."/>
            <person name="Song J."/>
            <person name="Olsen R."/>
            <person name="Szafranski K."/>
            <person name="Xu Q."/>
            <person name="Tunggal B."/>
            <person name="Kummerfeld S."/>
            <person name="Madera M."/>
            <person name="Konfortov B.A."/>
            <person name="Rivero F."/>
            <person name="Bankier A.T."/>
            <person name="Lehmann R."/>
            <person name="Hamlin N."/>
            <person name="Davies R."/>
            <person name="Gaudet P."/>
            <person name="Fey P."/>
            <person name="Pilcher K."/>
            <person name="Chen G."/>
            <person name="Saunders D."/>
            <person name="Sodergren E.J."/>
            <person name="Davis P."/>
            <person name="Kerhornou A."/>
            <person name="Nie X."/>
            <person name="Hall N."/>
            <person name="Anjard C."/>
            <person name="Hemphill L."/>
            <person name="Bason N."/>
            <person name="Farbrother P."/>
            <person name="Desany B."/>
            <person name="Just E."/>
            <person name="Morio T."/>
            <person name="Rost R."/>
            <person name="Churcher C.M."/>
            <person name="Cooper J."/>
            <person name="Haydock S."/>
            <person name="van Driessche N."/>
            <person name="Cronin A."/>
            <person name="Goodhead I."/>
            <person name="Muzny D.M."/>
            <person name="Mourier T."/>
            <person name="Pain A."/>
            <person name="Lu M."/>
            <person name="Harper D."/>
            <person name="Lindsay R."/>
            <person name="Hauser H."/>
            <person name="James K.D."/>
            <person name="Quiles M."/>
            <person name="Madan Babu M."/>
            <person name="Saito T."/>
            <person name="Buchrieser C."/>
            <person name="Wardroper A."/>
            <person name="Felder M."/>
            <person name="Thangavelu M."/>
            <person name="Johnson D."/>
            <person name="Knights A."/>
            <person name="Loulseged H."/>
            <person name="Mungall K.L."/>
            <person name="Oliver K."/>
            <person name="Price C."/>
            <person name="Quail M.A."/>
            <person name="Urushihara H."/>
            <person name="Hernandez J."/>
            <person name="Rabbinowitsch E."/>
            <person name="Steffen D."/>
            <person name="Sanders M."/>
            <person name="Ma J."/>
            <person name="Kohara Y."/>
            <person name="Sharp S."/>
            <person name="Simmonds M.N."/>
            <person name="Spiegler S."/>
            <person name="Tivey A."/>
            <person name="Sugano S."/>
            <person name="White B."/>
            <person name="Walker D."/>
            <person name="Woodward J.R."/>
            <person name="Winckler T."/>
            <person name="Tanaka Y."/>
            <person name="Shaulsky G."/>
            <person name="Schleicher M."/>
            <person name="Weinstock G.M."/>
            <person name="Rosenthal A."/>
            <person name="Cox E.C."/>
            <person name="Chisholm R.L."/>
            <person name="Gibbs R.A."/>
            <person name="Loomis W.F."/>
            <person name="Platzer M."/>
            <person name="Kay R.R."/>
            <person name="Williams J.G."/>
            <person name="Dear P.H."/>
            <person name="Noegel A.A."/>
            <person name="Barrell B.G."/>
            <person name="Kuspa A."/>
        </authorList>
    </citation>
    <scope>NUCLEOTIDE SEQUENCE [LARGE SCALE GENOMIC DNA]</scope>
    <source>
        <strain>AX4</strain>
    </source>
</reference>
<reference key="3">
    <citation type="journal article" date="2006" name="PLoS Genet.">
        <title>The dictyostelium kinome -- analysis of the protein kinases from a simple model organism.</title>
        <authorList>
            <person name="Goldberg J.M."/>
            <person name="Manning G."/>
            <person name="Liu A."/>
            <person name="Fey P."/>
            <person name="Pilcher K.E."/>
            <person name="Xu Y."/>
            <person name="Smith J.L."/>
        </authorList>
    </citation>
    <scope>GENE FAMILY</scope>
    <scope>NOMENCLATURE</scope>
</reference>
<keyword id="KW-0175">Coiled coil</keyword>
<keyword id="KW-0880">Kelch repeat</keyword>
<keyword id="KW-0479">Metal-binding</keyword>
<keyword id="KW-1185">Reference proteome</keyword>
<keyword id="KW-0677">Repeat</keyword>
<keyword id="KW-0862">Zinc</keyword>
<keyword id="KW-0863">Zinc-finger</keyword>
<name>Y1372_DICDI</name>
<accession>Q55BF8</accession>
<gene>
    <name type="ORF">DDB_G0271372</name>
</gene>
<sequence>MDRLLNCPNCLKVFNNPRQLECDHILCTRCIEGVYNPGRTPIIKCPVCDKHSIVITSIDKSFPLIHCIEELLTYKYKDCNYDDSLSIPLNNSTGSSNNNNNNNNNNNNNNNNFVINNSNNKNNGATTTTTTTTTTTNSNSNSTKSKVVVNDSSPNLISASPKGLGSSQGSLTTINNQKKLTLSPQRASSTTTTSVNKPPLKLKAISSPPITPNVSTPERCFVINDKNKHVMISSETTIHNVSGLSSISTPIVSDAAIAELSKCNDHDQKKFTIFCTDCDQLLCDECLNNNQQQHENHQLNKIIQEAEKRIGDIESMIITTSLCPNRLINKKNKIEKIIQDSALVLKDTKLKITTDIDTMIENLKERKNALISQIDKEYEEQKLELKDQIETINTTIVDIQNNTSITQGIVSLYLNQVDSEMLSTSLLKKYSDLKRMDQLSDKLSNNLEQNIEWKWEPEYHFPQLFTRSNGEKTTVVYRTKRVSVGVSSSPTGTGSNGTPQQQQQQSANGNPTIITTPPLPPISANSPSPTSSSSSTLIGNIIKRSSPPHLPLSSQNYDNFGSTPPRLTTKLSSPNLSISMPTFPQSNSVQQNGSTSSIMKQQSHGSKLNDNINTNNNNSPSPTSSSTTSTNGSNTKIQLKNPVFGKLLTRKDSVITARRNWIYGFSDHQVEIYDNVTKVWRGGSKIPKKSIEYSSIYDNNCTIYRFGGKETPNDIYCYNVDRDIWEHNKVKIPSKRNAHCSVFDGLRYIYLIGGADRDSSKLLERFDIETQQWTKLASMKFGRSYFNAFYHPTKRCIYVLDGYVNKDKKSSVEMYSLEKNQWSVICEINQPRYLSGVSFDGSKYINIIGGVDRSNSRDIKTMERFDTSTHKWEILNNEPKSLLSHTSSSMNLMVVQSPQLKKNNSFSSISSHSSLNSSSSNNGISGSGGSGGDNEIPTEKMQFFNTSFFDGEQFIFFYGINIDEHGPLLYKFSIKTKKFEKIPIDNTLDLFSTLIFVSK</sequence>
<proteinExistence type="predicted"/>